<sequence length="322" mass="35447">MSSNKLPTSKYDLSTYWGRVRHAMDITDPRTLLSTSQDLNSAVKTLEDYGAGKIAQLDETVWHAKKIVDSTLHPDTKEPVFLPFRMSCFVLTNLVVTAGMLQPNLGTAGTVFWQWMNQSVNVAFNSANANKSTQLTLPQMTKSYIYAVSASCGVAIGLNKIVPRMNFLSSSSKAVLGRLTPFAAVASAGVLNVFLMRGEELRQGIDVFDKEGESLGKSKKAAFYAVGETALSRVINASPIMVIPPLVLMRLQKQNWLRTRPKLTIPVNLGLITLTSLIALPLAIGVFPAREKISPFKLEPQFHHLKDKSDQPIVEVEFNRGL</sequence>
<feature type="chain" id="PRO_0000318075" description="Sideroflexin fsf1">
    <location>
        <begin position="1"/>
        <end position="322"/>
    </location>
</feature>
<feature type="transmembrane region" description="Helical" evidence="3">
    <location>
        <begin position="143"/>
        <end position="163"/>
    </location>
</feature>
<feature type="transmembrane region" description="Helical" evidence="3">
    <location>
        <begin position="175"/>
        <end position="195"/>
    </location>
</feature>
<feature type="transmembrane region" description="Helical" evidence="3">
    <location>
        <begin position="229"/>
        <end position="249"/>
    </location>
</feature>
<feature type="transmembrane region" description="Helical" evidence="3">
    <location>
        <begin position="269"/>
        <end position="289"/>
    </location>
</feature>
<organism>
    <name type="scientific">Schizosaccharomyces pombe (strain 972 / ATCC 24843)</name>
    <name type="common">Fission yeast</name>
    <dbReference type="NCBI Taxonomy" id="284812"/>
    <lineage>
        <taxon>Eukaryota</taxon>
        <taxon>Fungi</taxon>
        <taxon>Dikarya</taxon>
        <taxon>Ascomycota</taxon>
        <taxon>Taphrinomycotina</taxon>
        <taxon>Schizosaccharomycetes</taxon>
        <taxon>Schizosaccharomycetales</taxon>
        <taxon>Schizosaccharomycetaceae</taxon>
        <taxon>Schizosaccharomyces</taxon>
    </lineage>
</organism>
<gene>
    <name evidence="5 7" type="primary">fsf1</name>
    <name type="ORF">SPAC17G6.15c</name>
</gene>
<accession>O13793</accession>
<reference key="1">
    <citation type="journal article" date="2002" name="Nature">
        <title>The genome sequence of Schizosaccharomyces pombe.</title>
        <authorList>
            <person name="Wood V."/>
            <person name="Gwilliam R."/>
            <person name="Rajandream M.A."/>
            <person name="Lyne M.H."/>
            <person name="Lyne R."/>
            <person name="Stewart A."/>
            <person name="Sgouros J.G."/>
            <person name="Peat N."/>
            <person name="Hayles J."/>
            <person name="Baker S.G."/>
            <person name="Basham D."/>
            <person name="Bowman S."/>
            <person name="Brooks K."/>
            <person name="Brown D."/>
            <person name="Brown S."/>
            <person name="Chillingworth T."/>
            <person name="Churcher C.M."/>
            <person name="Collins M."/>
            <person name="Connor R."/>
            <person name="Cronin A."/>
            <person name="Davis P."/>
            <person name="Feltwell T."/>
            <person name="Fraser A."/>
            <person name="Gentles S."/>
            <person name="Goble A."/>
            <person name="Hamlin N."/>
            <person name="Harris D.E."/>
            <person name="Hidalgo J."/>
            <person name="Hodgson G."/>
            <person name="Holroyd S."/>
            <person name="Hornsby T."/>
            <person name="Howarth S."/>
            <person name="Huckle E.J."/>
            <person name="Hunt S."/>
            <person name="Jagels K."/>
            <person name="James K.D."/>
            <person name="Jones L."/>
            <person name="Jones M."/>
            <person name="Leather S."/>
            <person name="McDonald S."/>
            <person name="McLean J."/>
            <person name="Mooney P."/>
            <person name="Moule S."/>
            <person name="Mungall K.L."/>
            <person name="Murphy L.D."/>
            <person name="Niblett D."/>
            <person name="Odell C."/>
            <person name="Oliver K."/>
            <person name="O'Neil S."/>
            <person name="Pearson D."/>
            <person name="Quail M.A."/>
            <person name="Rabbinowitsch E."/>
            <person name="Rutherford K.M."/>
            <person name="Rutter S."/>
            <person name="Saunders D."/>
            <person name="Seeger K."/>
            <person name="Sharp S."/>
            <person name="Skelton J."/>
            <person name="Simmonds M.N."/>
            <person name="Squares R."/>
            <person name="Squares S."/>
            <person name="Stevens K."/>
            <person name="Taylor K."/>
            <person name="Taylor R.G."/>
            <person name="Tivey A."/>
            <person name="Walsh S.V."/>
            <person name="Warren T."/>
            <person name="Whitehead S."/>
            <person name="Woodward J.R."/>
            <person name="Volckaert G."/>
            <person name="Aert R."/>
            <person name="Robben J."/>
            <person name="Grymonprez B."/>
            <person name="Weltjens I."/>
            <person name="Vanstreels E."/>
            <person name="Rieger M."/>
            <person name="Schaefer M."/>
            <person name="Mueller-Auer S."/>
            <person name="Gabel C."/>
            <person name="Fuchs M."/>
            <person name="Duesterhoeft A."/>
            <person name="Fritzc C."/>
            <person name="Holzer E."/>
            <person name="Moestl D."/>
            <person name="Hilbert H."/>
            <person name="Borzym K."/>
            <person name="Langer I."/>
            <person name="Beck A."/>
            <person name="Lehrach H."/>
            <person name="Reinhardt R."/>
            <person name="Pohl T.M."/>
            <person name="Eger P."/>
            <person name="Zimmermann W."/>
            <person name="Wedler H."/>
            <person name="Wambutt R."/>
            <person name="Purnelle B."/>
            <person name="Goffeau A."/>
            <person name="Cadieu E."/>
            <person name="Dreano S."/>
            <person name="Gloux S."/>
            <person name="Lelaure V."/>
            <person name="Mottier S."/>
            <person name="Galibert F."/>
            <person name="Aves S.J."/>
            <person name="Xiang Z."/>
            <person name="Hunt C."/>
            <person name="Moore K."/>
            <person name="Hurst S.M."/>
            <person name="Lucas M."/>
            <person name="Rochet M."/>
            <person name="Gaillardin C."/>
            <person name="Tallada V.A."/>
            <person name="Garzon A."/>
            <person name="Thode G."/>
            <person name="Daga R.R."/>
            <person name="Cruzado L."/>
            <person name="Jimenez J."/>
            <person name="Sanchez M."/>
            <person name="del Rey F."/>
            <person name="Benito J."/>
            <person name="Dominguez A."/>
            <person name="Revuelta J.L."/>
            <person name="Moreno S."/>
            <person name="Armstrong J."/>
            <person name="Forsburg S.L."/>
            <person name="Cerutti L."/>
            <person name="Lowe T."/>
            <person name="McCombie W.R."/>
            <person name="Paulsen I."/>
            <person name="Potashkin J."/>
            <person name="Shpakovski G.V."/>
            <person name="Ussery D."/>
            <person name="Barrell B.G."/>
            <person name="Nurse P."/>
        </authorList>
    </citation>
    <scope>NUCLEOTIDE SEQUENCE [LARGE SCALE GENOMIC DNA]</scope>
    <source>
        <strain>972 / ATCC 24843</strain>
    </source>
</reference>
<reference key="2">
    <citation type="journal article" date="2011" name="Science">
        <title>Comparative functional genomics of the fission yeasts.</title>
        <authorList>
            <person name="Rhind N."/>
            <person name="Chen Z."/>
            <person name="Yassour M."/>
            <person name="Thompson D.A."/>
            <person name="Haas B.J."/>
            <person name="Habib N."/>
            <person name="Wapinski I."/>
            <person name="Roy S."/>
            <person name="Lin M.F."/>
            <person name="Heiman D.I."/>
            <person name="Young S.K."/>
            <person name="Furuya K."/>
            <person name="Guo Y."/>
            <person name="Pidoux A."/>
            <person name="Chen H.M."/>
            <person name="Robbertse B."/>
            <person name="Goldberg J.M."/>
            <person name="Aoki K."/>
            <person name="Bayne E.H."/>
            <person name="Berlin A.M."/>
            <person name="Desjardins C.A."/>
            <person name="Dobbs E."/>
            <person name="Dukaj L."/>
            <person name="Fan L."/>
            <person name="FitzGerald M.G."/>
            <person name="French C."/>
            <person name="Gujja S."/>
            <person name="Hansen K."/>
            <person name="Keifenheim D."/>
            <person name="Levin J.Z."/>
            <person name="Mosher R.A."/>
            <person name="Mueller C.A."/>
            <person name="Pfiffner J."/>
            <person name="Priest M."/>
            <person name="Russ C."/>
            <person name="Smialowska A."/>
            <person name="Swoboda P."/>
            <person name="Sykes S.M."/>
            <person name="Vaughn M."/>
            <person name="Vengrova S."/>
            <person name="Yoder R."/>
            <person name="Zeng Q."/>
            <person name="Allshire R."/>
            <person name="Baulcombe D."/>
            <person name="Birren B.W."/>
            <person name="Brown W."/>
            <person name="Ekwall K."/>
            <person name="Kellis M."/>
            <person name="Leatherwood J."/>
            <person name="Levin H."/>
            <person name="Margalit H."/>
            <person name="Martienssen R."/>
            <person name="Nieduszynski C.A."/>
            <person name="Spatafora J.W."/>
            <person name="Friedman N."/>
            <person name="Dalgaard J.Z."/>
            <person name="Baumann P."/>
            <person name="Niki H."/>
            <person name="Regev A."/>
            <person name="Nusbaum C."/>
        </authorList>
    </citation>
    <scope>REVISION OF GENE MODEL</scope>
</reference>
<reference key="3">
    <citation type="journal article" date="2006" name="Nat. Biotechnol.">
        <title>ORFeome cloning and global analysis of protein localization in the fission yeast Schizosaccharomyces pombe.</title>
        <authorList>
            <person name="Matsuyama A."/>
            <person name="Arai R."/>
            <person name="Yashiroda Y."/>
            <person name="Shirai A."/>
            <person name="Kamata A."/>
            <person name="Sekido S."/>
            <person name="Kobayashi Y."/>
            <person name="Hashimoto A."/>
            <person name="Hamamoto M."/>
            <person name="Hiraoka Y."/>
            <person name="Horinouchi S."/>
            <person name="Yoshida M."/>
        </authorList>
    </citation>
    <scope>SUBCELLULAR LOCATION [LARGE SCALE ANALYSIS]</scope>
</reference>
<reference key="4">
    <citation type="journal article" date="2007" name="Fungal Genet. Biol.">
        <title>In silico analyses of Fsf1 sequences, a new group of fungal proteins orthologous to the metazoan sideroblastic anemia-related sideroflexin family.</title>
        <authorList>
            <person name="Miotto G."/>
            <person name="Tessaro S."/>
            <person name="Rotta G.A."/>
            <person name="Bonatto D."/>
        </authorList>
    </citation>
    <scope>GENE NAME</scope>
</reference>
<name>FSF1_SCHPO</name>
<evidence type="ECO:0000250" key="1">
    <source>
        <dbReference type="UniProtKB" id="Q12029"/>
    </source>
</evidence>
<evidence type="ECO:0000250" key="2">
    <source>
        <dbReference type="UniProtKB" id="Q8CFD0"/>
    </source>
</evidence>
<evidence type="ECO:0000255" key="3"/>
<evidence type="ECO:0000269" key="4">
    <source>
    </source>
</evidence>
<evidence type="ECO:0000303" key="5">
    <source>
    </source>
</evidence>
<evidence type="ECO:0000305" key="6"/>
<evidence type="ECO:0000312" key="7">
    <source>
        <dbReference type="PomBase" id="SPAC17G6.15c"/>
    </source>
</evidence>
<dbReference type="EMBL" id="CU329670">
    <property type="protein sequence ID" value="CAB16226.2"/>
    <property type="molecule type" value="Genomic_DNA"/>
</dbReference>
<dbReference type="PIR" id="T37847">
    <property type="entry name" value="T37847"/>
</dbReference>
<dbReference type="RefSeq" id="NP_594262.2">
    <property type="nucleotide sequence ID" value="NM_001019685.2"/>
</dbReference>
<dbReference type="FunCoup" id="O13793">
    <property type="interactions" value="93"/>
</dbReference>
<dbReference type="STRING" id="284812.O13793"/>
<dbReference type="PaxDb" id="4896-SPAC17G6.15c.1"/>
<dbReference type="EnsemblFungi" id="SPAC17G6.15c.1">
    <property type="protein sequence ID" value="SPAC17G6.15c.1:pep"/>
    <property type="gene ID" value="SPAC17G6.15c"/>
</dbReference>
<dbReference type="GeneID" id="2542199"/>
<dbReference type="KEGG" id="spo:2542199"/>
<dbReference type="PomBase" id="SPAC17G6.15c">
    <property type="gene designation" value="fsf1"/>
</dbReference>
<dbReference type="VEuPathDB" id="FungiDB:SPAC17G6.15c"/>
<dbReference type="eggNOG" id="KOG3767">
    <property type="taxonomic scope" value="Eukaryota"/>
</dbReference>
<dbReference type="HOGENOM" id="CLU_039425_0_0_1"/>
<dbReference type="InParanoid" id="O13793"/>
<dbReference type="OMA" id="GRVRHCA"/>
<dbReference type="PRO" id="PR:O13793"/>
<dbReference type="Proteomes" id="UP000002485">
    <property type="component" value="Chromosome I"/>
</dbReference>
<dbReference type="GO" id="GO:0005743">
    <property type="term" value="C:mitochondrial inner membrane"/>
    <property type="evidence" value="ECO:0000318"/>
    <property type="project" value="GO_Central"/>
</dbReference>
<dbReference type="GO" id="GO:0005739">
    <property type="term" value="C:mitochondrion"/>
    <property type="evidence" value="ECO:0007005"/>
    <property type="project" value="PomBase"/>
</dbReference>
<dbReference type="GO" id="GO:0015194">
    <property type="term" value="F:L-serine transmembrane transporter activity"/>
    <property type="evidence" value="ECO:0000250"/>
    <property type="project" value="PomBase"/>
</dbReference>
<dbReference type="GO" id="GO:0015075">
    <property type="term" value="F:monoatomic ion transmembrane transporter activity"/>
    <property type="evidence" value="ECO:0007669"/>
    <property type="project" value="InterPro"/>
</dbReference>
<dbReference type="GO" id="GO:0022857">
    <property type="term" value="F:transmembrane transporter activity"/>
    <property type="evidence" value="ECO:0000318"/>
    <property type="project" value="GO_Central"/>
</dbReference>
<dbReference type="GO" id="GO:1990542">
    <property type="term" value="P:mitochondrial transmembrane transport"/>
    <property type="evidence" value="ECO:0000318"/>
    <property type="project" value="GO_Central"/>
</dbReference>
<dbReference type="GO" id="GO:0140300">
    <property type="term" value="P:serine import into mitochondrion"/>
    <property type="evidence" value="ECO:0000250"/>
    <property type="project" value="PomBase"/>
</dbReference>
<dbReference type="InterPro" id="IPR004686">
    <property type="entry name" value="Mtc"/>
</dbReference>
<dbReference type="NCBIfam" id="TIGR00798">
    <property type="entry name" value="mtc"/>
    <property type="match status" value="1"/>
</dbReference>
<dbReference type="PANTHER" id="PTHR11153">
    <property type="entry name" value="SIDEROFLEXIN"/>
    <property type="match status" value="1"/>
</dbReference>
<dbReference type="PANTHER" id="PTHR11153:SF6">
    <property type="entry name" value="SIDEROFLEXIN-5"/>
    <property type="match status" value="1"/>
</dbReference>
<dbReference type="Pfam" id="PF03820">
    <property type="entry name" value="SFXNs"/>
    <property type="match status" value="1"/>
</dbReference>
<keyword id="KW-0029">Amino-acid transport</keyword>
<keyword id="KW-0472">Membrane</keyword>
<keyword id="KW-0496">Mitochondrion</keyword>
<keyword id="KW-1185">Reference proteome</keyword>
<keyword id="KW-0812">Transmembrane</keyword>
<keyword id="KW-1133">Transmembrane helix</keyword>
<keyword id="KW-0813">Transport</keyword>
<comment type="function">
    <text evidence="1">Mitochondrial amino-acid transporter that mediates transport of serine into mitochondria.</text>
</comment>
<comment type="subcellular location">
    <subcellularLocation>
        <location evidence="4">Mitochondrion membrane</location>
        <topology evidence="2 3 4">Multi-pass membrane protein</topology>
    </subcellularLocation>
</comment>
<comment type="similarity">
    <text evidence="6">Belongs to the sideroflexin family.</text>
</comment>
<protein>
    <recommendedName>
        <fullName evidence="6">Sideroflexin fsf1</fullName>
    </recommendedName>
    <alternativeName>
        <fullName evidence="5">Fungal sideroflexin-1</fullName>
    </alternativeName>
</protein>
<proteinExistence type="inferred from homology"/>